<reference key="1">
    <citation type="journal article" date="2022" name="Front. Mar. Sci.">
        <title>Transcriptome sequencing of the pale anemones (Exaiptasia diaphana) revealed functional peptide gene resources of sea anemone.</title>
        <authorList>
            <person name="Fu J."/>
            <person name="He Y."/>
            <person name="Peng C."/>
            <person name="Tang T."/>
            <person name="Jin A."/>
            <person name="Liao Y."/>
            <person name="Shi Q."/>
            <person name="Gao B."/>
        </authorList>
    </citation>
    <scope>NUCLEOTIDE SEQUENCE [LARGE SCALE MRNA]</scope>
</reference>
<reference key="2">
    <citation type="journal article" date="2024" name="Mar. Drugs">
        <title>Synthesis and hypoglycemic effect of insulin from the venom of sea anemone Exaiptasia diaphana.</title>
        <authorList>
            <person name="Guo Q."/>
            <person name="Tang T."/>
            <person name="Lu J."/>
            <person name="Huang M."/>
            <person name="Zhang J."/>
            <person name="Ma L."/>
            <person name="Gao B."/>
        </authorList>
    </citation>
    <scope>3D-STRUCTURE MODELING</scope>
</reference>
<proteinExistence type="inferred from homology"/>
<comment type="function">
    <text evidence="1 2">Insulin decreases blood glucose concentration (By similarity). May have evolved to activate insulin receptors (INSR) in vertebrates. Molecular docking studies reveals unique interaction with the human insulin receptor. In vivo, insulin-like peptide injection reduces blood glucose levels in two models of zebrafish diabetes (streptozotocin- and glucose-induced). Also shorter swimming distance of zebrafish larvae, an effect which is not observed with human insulin (By similarity).</text>
</comment>
<comment type="subcellular location">
    <subcellularLocation>
        <location evidence="7">Secreted</location>
    </subcellularLocation>
</comment>
<comment type="similarity">
    <text evidence="6">Belongs to the insulin family.</text>
</comment>
<comment type="online information" name="National Center for Biotechnology Information (NCBI)">
    <link uri="https://www.ncbi.nlm.nih.gov/sra/?term=SRP303227"/>
</comment>
<feature type="signal peptide" evidence="3">
    <location>
        <begin position="1"/>
        <end position="22"/>
    </location>
</feature>
<feature type="propeptide" id="PRO_0000461942" evidence="7">
    <location>
        <begin position="23"/>
        <end position="37"/>
    </location>
</feature>
<feature type="chain" id="PRO_0000461943" description="ILP-Ap05 A chain" evidence="7">
    <location>
        <begin position="38"/>
        <end position="59"/>
    </location>
</feature>
<feature type="chain" id="PRO_0000461944" description="ILP-Ap05 B chain" evidence="7">
    <location>
        <begin position="60"/>
        <end position="84"/>
    </location>
</feature>
<feature type="disulfide bond" evidence="1">
    <location>
        <begin position="43"/>
        <end position="48"/>
    </location>
</feature>
<feature type="disulfide bond" description="Interchain (between B and A chains)" evidence="1">
    <location>
        <begin position="44"/>
        <end position="73"/>
    </location>
</feature>
<feature type="disulfide bond" description="Interchain (between B and A chains)" evidence="1">
    <location>
        <begin position="57"/>
        <end position="61"/>
    </location>
</feature>
<keyword id="KW-0119">Carbohydrate metabolism</keyword>
<keyword id="KW-1015">Disulfide bond</keyword>
<keyword id="KW-0313">Glucose metabolism</keyword>
<keyword id="KW-0372">Hormone</keyword>
<keyword id="KW-1185">Reference proteome</keyword>
<keyword id="KW-0964">Secreted</keyword>
<keyword id="KW-0732">Signal</keyword>
<accession>P0DRI3</accession>
<evidence type="ECO:0000250" key="1">
    <source>
        <dbReference type="UniProtKB" id="P01308"/>
    </source>
</evidence>
<evidence type="ECO:0000250" key="2">
    <source>
        <dbReference type="UniProtKB" id="P0DRI2"/>
    </source>
</evidence>
<evidence type="ECO:0000255" key="3"/>
<evidence type="ECO:0000303" key="4">
    <source>
    </source>
</evidence>
<evidence type="ECO:0000303" key="5">
    <source ref="1"/>
</evidence>
<evidence type="ECO:0000305" key="6"/>
<evidence type="ECO:0000305" key="7">
    <source ref="1"/>
</evidence>
<protein>
    <recommendedName>
        <fullName evidence="4 5">Insulin-like peptide 05</fullName>
        <shortName evidence="4 5">ILP-Ap05</shortName>
    </recommendedName>
    <component>
        <recommendedName>
            <fullName evidence="4 5">ILP-Ap05 B chain</fullName>
        </recommendedName>
    </component>
    <component>
        <recommendedName>
            <fullName evidence="4 5">ILP-Ap05 A chain</fullName>
        </recommendedName>
    </component>
</protein>
<organism>
    <name type="scientific">Exaiptasia diaphana</name>
    <name type="common">Tropical sea anemone</name>
    <name type="synonym">Aiptasia pulchella</name>
    <dbReference type="NCBI Taxonomy" id="2652724"/>
    <lineage>
        <taxon>Eukaryota</taxon>
        <taxon>Metazoa</taxon>
        <taxon>Cnidaria</taxon>
        <taxon>Anthozoa</taxon>
        <taxon>Hexacorallia</taxon>
        <taxon>Actiniaria</taxon>
        <taxon>Aiptasiidae</taxon>
        <taxon>Exaiptasia</taxon>
    </lineage>
</organism>
<name>INS5_EXADI</name>
<sequence>MKTPILFVVVVAVLIVTDSAEGFKGKANSFLKPLQRRGLEEECCQETCSYHEIWENCKKLCSDELHKMFVEICQPPTEKVPERD</sequence>
<dbReference type="Proteomes" id="UP000887567">
    <property type="component" value="Unplaced"/>
</dbReference>
<dbReference type="Gene3D" id="4.10.740.10">
    <property type="entry name" value="Coagulation Factor IX"/>
    <property type="match status" value="1"/>
</dbReference>
<dbReference type="InterPro" id="IPR017857">
    <property type="entry name" value="Coagulation_fac-like_Gla_dom"/>
</dbReference>
<dbReference type="InterPro" id="IPR036438">
    <property type="entry name" value="Insulin-like_sf"/>
</dbReference>
<dbReference type="InterPro" id="IPR022353">
    <property type="entry name" value="Insulin_CS"/>
</dbReference>
<dbReference type="SUPFAM" id="SSF56994">
    <property type="entry name" value="Insulin-like"/>
    <property type="match status" value="1"/>
</dbReference>
<dbReference type="PROSITE" id="PS00262">
    <property type="entry name" value="INSULIN"/>
    <property type="match status" value="1"/>
</dbReference>